<keyword id="KW-1185">Reference proteome</keyword>
<keyword id="KW-0687">Ribonucleoprotein</keyword>
<keyword id="KW-0689">Ribosomal protein</keyword>
<keyword id="KW-0694">RNA-binding</keyword>
<keyword id="KW-0699">rRNA-binding</keyword>
<protein>
    <recommendedName>
        <fullName evidence="1">Small ribosomal subunit protein uS15</fullName>
    </recommendedName>
    <alternativeName>
        <fullName evidence="2">30S ribosomal protein S15</fullName>
    </alternativeName>
</protein>
<organism>
    <name type="scientific">Streptomyces coelicolor (strain ATCC BAA-471 / A3(2) / M145)</name>
    <dbReference type="NCBI Taxonomy" id="100226"/>
    <lineage>
        <taxon>Bacteria</taxon>
        <taxon>Bacillati</taxon>
        <taxon>Actinomycetota</taxon>
        <taxon>Actinomycetes</taxon>
        <taxon>Kitasatosporales</taxon>
        <taxon>Streptomycetaceae</taxon>
        <taxon>Streptomyces</taxon>
        <taxon>Streptomyces albidoflavus group</taxon>
    </lineage>
</organism>
<evidence type="ECO:0000255" key="1">
    <source>
        <dbReference type="HAMAP-Rule" id="MF_01343"/>
    </source>
</evidence>
<evidence type="ECO:0000305" key="2"/>
<feature type="chain" id="PRO_0000115563" description="Small ribosomal subunit protein uS15">
    <location>
        <begin position="1"/>
        <end position="95"/>
    </location>
</feature>
<dbReference type="EMBL" id="AL939124">
    <property type="protein sequence ID" value="CAA20271.1"/>
    <property type="molecule type" value="Genomic_DNA"/>
</dbReference>
<dbReference type="PIR" id="T10931">
    <property type="entry name" value="T10931"/>
</dbReference>
<dbReference type="RefSeq" id="NP_629862.1">
    <property type="nucleotide sequence ID" value="NC_003888.3"/>
</dbReference>
<dbReference type="RefSeq" id="WP_003973291.1">
    <property type="nucleotide sequence ID" value="NZ_VNID01000024.1"/>
</dbReference>
<dbReference type="SMR" id="O86655"/>
<dbReference type="FunCoup" id="O86655">
    <property type="interactions" value="186"/>
</dbReference>
<dbReference type="STRING" id="100226.gene:17763392"/>
<dbReference type="PaxDb" id="100226-SCO5736"/>
<dbReference type="GeneID" id="97461922"/>
<dbReference type="KEGG" id="sco:SCO5736"/>
<dbReference type="PATRIC" id="fig|100226.15.peg.5824"/>
<dbReference type="eggNOG" id="COG0184">
    <property type="taxonomic scope" value="Bacteria"/>
</dbReference>
<dbReference type="HOGENOM" id="CLU_148518_0_0_11"/>
<dbReference type="InParanoid" id="O86655"/>
<dbReference type="OrthoDB" id="9799262at2"/>
<dbReference type="PhylomeDB" id="O86655"/>
<dbReference type="Proteomes" id="UP000001973">
    <property type="component" value="Chromosome"/>
</dbReference>
<dbReference type="GO" id="GO:0022627">
    <property type="term" value="C:cytosolic small ribosomal subunit"/>
    <property type="evidence" value="ECO:0000318"/>
    <property type="project" value="GO_Central"/>
</dbReference>
<dbReference type="GO" id="GO:0019843">
    <property type="term" value="F:rRNA binding"/>
    <property type="evidence" value="ECO:0007669"/>
    <property type="project" value="UniProtKB-UniRule"/>
</dbReference>
<dbReference type="GO" id="GO:0003735">
    <property type="term" value="F:structural constituent of ribosome"/>
    <property type="evidence" value="ECO:0007669"/>
    <property type="project" value="InterPro"/>
</dbReference>
<dbReference type="GO" id="GO:0006412">
    <property type="term" value="P:translation"/>
    <property type="evidence" value="ECO:0007669"/>
    <property type="project" value="UniProtKB-UniRule"/>
</dbReference>
<dbReference type="CDD" id="cd00353">
    <property type="entry name" value="Ribosomal_S15p_S13e"/>
    <property type="match status" value="1"/>
</dbReference>
<dbReference type="FunFam" id="1.10.287.10:FF:000002">
    <property type="entry name" value="30S ribosomal protein S15"/>
    <property type="match status" value="1"/>
</dbReference>
<dbReference type="Gene3D" id="6.10.250.3130">
    <property type="match status" value="1"/>
</dbReference>
<dbReference type="Gene3D" id="1.10.287.10">
    <property type="entry name" value="S15/NS1, RNA-binding"/>
    <property type="match status" value="1"/>
</dbReference>
<dbReference type="HAMAP" id="MF_01343_B">
    <property type="entry name" value="Ribosomal_uS15_B"/>
    <property type="match status" value="1"/>
</dbReference>
<dbReference type="InterPro" id="IPR000589">
    <property type="entry name" value="Ribosomal_uS15"/>
</dbReference>
<dbReference type="InterPro" id="IPR005290">
    <property type="entry name" value="Ribosomal_uS15_bac-type"/>
</dbReference>
<dbReference type="InterPro" id="IPR009068">
    <property type="entry name" value="uS15_NS1_RNA-bd_sf"/>
</dbReference>
<dbReference type="NCBIfam" id="TIGR00952">
    <property type="entry name" value="S15_bact"/>
    <property type="match status" value="1"/>
</dbReference>
<dbReference type="PANTHER" id="PTHR23321">
    <property type="entry name" value="RIBOSOMAL PROTEIN S15, BACTERIAL AND ORGANELLAR"/>
    <property type="match status" value="1"/>
</dbReference>
<dbReference type="PANTHER" id="PTHR23321:SF26">
    <property type="entry name" value="SMALL RIBOSOMAL SUBUNIT PROTEIN US15M"/>
    <property type="match status" value="1"/>
</dbReference>
<dbReference type="Pfam" id="PF00312">
    <property type="entry name" value="Ribosomal_S15"/>
    <property type="match status" value="1"/>
</dbReference>
<dbReference type="SMART" id="SM01387">
    <property type="entry name" value="Ribosomal_S15"/>
    <property type="match status" value="1"/>
</dbReference>
<dbReference type="SUPFAM" id="SSF47060">
    <property type="entry name" value="S15/NS1 RNA-binding domain"/>
    <property type="match status" value="1"/>
</dbReference>
<dbReference type="PROSITE" id="PS00362">
    <property type="entry name" value="RIBOSOMAL_S15"/>
    <property type="match status" value="1"/>
</dbReference>
<reference key="1">
    <citation type="journal article" date="2002" name="Nature">
        <title>Complete genome sequence of the model actinomycete Streptomyces coelicolor A3(2).</title>
        <authorList>
            <person name="Bentley S.D."/>
            <person name="Chater K.F."/>
            <person name="Cerdeno-Tarraga A.-M."/>
            <person name="Challis G.L."/>
            <person name="Thomson N.R."/>
            <person name="James K.D."/>
            <person name="Harris D.E."/>
            <person name="Quail M.A."/>
            <person name="Kieser H."/>
            <person name="Harper D."/>
            <person name="Bateman A."/>
            <person name="Brown S."/>
            <person name="Chandra G."/>
            <person name="Chen C.W."/>
            <person name="Collins M."/>
            <person name="Cronin A."/>
            <person name="Fraser A."/>
            <person name="Goble A."/>
            <person name="Hidalgo J."/>
            <person name="Hornsby T."/>
            <person name="Howarth S."/>
            <person name="Huang C.-H."/>
            <person name="Kieser T."/>
            <person name="Larke L."/>
            <person name="Murphy L.D."/>
            <person name="Oliver K."/>
            <person name="O'Neil S."/>
            <person name="Rabbinowitsch E."/>
            <person name="Rajandream M.A."/>
            <person name="Rutherford K.M."/>
            <person name="Rutter S."/>
            <person name="Seeger K."/>
            <person name="Saunders D."/>
            <person name="Sharp S."/>
            <person name="Squares R."/>
            <person name="Squares S."/>
            <person name="Taylor K."/>
            <person name="Warren T."/>
            <person name="Wietzorrek A."/>
            <person name="Woodward J.R."/>
            <person name="Barrell B.G."/>
            <person name="Parkhill J."/>
            <person name="Hopwood D.A."/>
        </authorList>
    </citation>
    <scope>NUCLEOTIDE SEQUENCE [LARGE SCALE GENOMIC DNA]</scope>
    <source>
        <strain>ATCC BAA-471 / A3(2) / M145</strain>
    </source>
</reference>
<comment type="function">
    <text evidence="1">One of the primary rRNA binding proteins, it binds directly to 16S rRNA where it helps nucleate assembly of the platform of the 30S subunit by binding and bridging several RNA helices of the 16S rRNA.</text>
</comment>
<comment type="function">
    <text evidence="1">Forms an intersubunit bridge (bridge B4) with the 23S rRNA of the 50S subunit in the ribosome.</text>
</comment>
<comment type="subunit">
    <text evidence="1">Part of the 30S ribosomal subunit. Forms a bridge to the 50S subunit in the 70S ribosome, contacting the 23S rRNA.</text>
</comment>
<comment type="similarity">
    <text evidence="1">Belongs to the universal ribosomal protein uS15 family.</text>
</comment>
<proteinExistence type="inferred from homology"/>
<name>RS15_STRCO</name>
<gene>
    <name evidence="1" type="primary">rpsO</name>
    <name type="ordered locus">SCO5736</name>
    <name type="ORF">SC3C3.22</name>
</gene>
<accession>O86655</accession>
<sequence>MSLDAAVKKQIITEFGTKEGDTGSPEVQVALLSRRISDLTEHLKTHKHDHHSRRGLLILVGQRRRLLQYLAKKDIQRFRALVERLGIRRGAAGAR</sequence>